<sequence>MSGDVVAELKGRIDKSLEGLRTDLTRVRTGRASIAILEGVRVDYYGTPTPLSGVASVNAPEPRLITIKPWEKSVLKDIEKALREANLGINPMNDGEMIRLPFPPLTEERRKDIAKQVKTKGEEFKVTIRNLRRDANEVLKTQLKDKKITEDDHKRITEVVQKQTDAGITQVDEIVKKKEKEVMEV</sequence>
<accession>Q1D1I2</accession>
<gene>
    <name evidence="1" type="primary">frr</name>
    <name type="ordered locus">MXAN_5341</name>
</gene>
<evidence type="ECO:0000255" key="1">
    <source>
        <dbReference type="HAMAP-Rule" id="MF_00040"/>
    </source>
</evidence>
<feature type="chain" id="PRO_1000074588" description="Ribosome-recycling factor">
    <location>
        <begin position="1"/>
        <end position="185"/>
    </location>
</feature>
<proteinExistence type="inferred from homology"/>
<organism>
    <name type="scientific">Myxococcus xanthus (strain DK1622)</name>
    <dbReference type="NCBI Taxonomy" id="246197"/>
    <lineage>
        <taxon>Bacteria</taxon>
        <taxon>Pseudomonadati</taxon>
        <taxon>Myxococcota</taxon>
        <taxon>Myxococcia</taxon>
        <taxon>Myxococcales</taxon>
        <taxon>Cystobacterineae</taxon>
        <taxon>Myxococcaceae</taxon>
        <taxon>Myxococcus</taxon>
    </lineage>
</organism>
<comment type="function">
    <text evidence="1">Responsible for the release of ribosomes from messenger RNA at the termination of protein biosynthesis. May increase the efficiency of translation by recycling ribosomes from one round of translation to another.</text>
</comment>
<comment type="subcellular location">
    <subcellularLocation>
        <location evidence="1">Cytoplasm</location>
    </subcellularLocation>
</comment>
<comment type="similarity">
    <text evidence="1">Belongs to the RRF family.</text>
</comment>
<reference key="1">
    <citation type="journal article" date="2006" name="Proc. Natl. Acad. Sci. U.S.A.">
        <title>Evolution of sensory complexity recorded in a myxobacterial genome.</title>
        <authorList>
            <person name="Goldman B.S."/>
            <person name="Nierman W.C."/>
            <person name="Kaiser D."/>
            <person name="Slater S.C."/>
            <person name="Durkin A.S."/>
            <person name="Eisen J.A."/>
            <person name="Ronning C.M."/>
            <person name="Barbazuk W.B."/>
            <person name="Blanchard M."/>
            <person name="Field C."/>
            <person name="Halling C."/>
            <person name="Hinkle G."/>
            <person name="Iartchuk O."/>
            <person name="Kim H.S."/>
            <person name="Mackenzie C."/>
            <person name="Madupu R."/>
            <person name="Miller N."/>
            <person name="Shvartsbeyn A."/>
            <person name="Sullivan S.A."/>
            <person name="Vaudin M."/>
            <person name="Wiegand R."/>
            <person name="Kaplan H.B."/>
        </authorList>
    </citation>
    <scope>NUCLEOTIDE SEQUENCE [LARGE SCALE GENOMIC DNA]</scope>
    <source>
        <strain>DK1622</strain>
    </source>
</reference>
<dbReference type="EMBL" id="CP000113">
    <property type="protein sequence ID" value="ABF90662.1"/>
    <property type="molecule type" value="Genomic_DNA"/>
</dbReference>
<dbReference type="RefSeq" id="WP_011555306.1">
    <property type="nucleotide sequence ID" value="NC_008095.1"/>
</dbReference>
<dbReference type="SMR" id="Q1D1I2"/>
<dbReference type="STRING" id="246197.MXAN_5341"/>
<dbReference type="EnsemblBacteria" id="ABF90662">
    <property type="protein sequence ID" value="ABF90662"/>
    <property type="gene ID" value="MXAN_5341"/>
</dbReference>
<dbReference type="GeneID" id="41362610"/>
<dbReference type="KEGG" id="mxa:MXAN_5341"/>
<dbReference type="eggNOG" id="COG0233">
    <property type="taxonomic scope" value="Bacteria"/>
</dbReference>
<dbReference type="HOGENOM" id="CLU_073981_2_0_7"/>
<dbReference type="OrthoDB" id="9804006at2"/>
<dbReference type="Proteomes" id="UP000002402">
    <property type="component" value="Chromosome"/>
</dbReference>
<dbReference type="GO" id="GO:0005829">
    <property type="term" value="C:cytosol"/>
    <property type="evidence" value="ECO:0007669"/>
    <property type="project" value="GOC"/>
</dbReference>
<dbReference type="GO" id="GO:0043023">
    <property type="term" value="F:ribosomal large subunit binding"/>
    <property type="evidence" value="ECO:0007669"/>
    <property type="project" value="TreeGrafter"/>
</dbReference>
<dbReference type="GO" id="GO:0002184">
    <property type="term" value="P:cytoplasmic translational termination"/>
    <property type="evidence" value="ECO:0007669"/>
    <property type="project" value="TreeGrafter"/>
</dbReference>
<dbReference type="CDD" id="cd00520">
    <property type="entry name" value="RRF"/>
    <property type="match status" value="1"/>
</dbReference>
<dbReference type="FunFam" id="1.10.132.20:FF:000001">
    <property type="entry name" value="Ribosome-recycling factor"/>
    <property type="match status" value="1"/>
</dbReference>
<dbReference type="FunFam" id="3.30.1360.40:FF:000001">
    <property type="entry name" value="Ribosome-recycling factor"/>
    <property type="match status" value="1"/>
</dbReference>
<dbReference type="Gene3D" id="3.30.1360.40">
    <property type="match status" value="1"/>
</dbReference>
<dbReference type="Gene3D" id="1.10.132.20">
    <property type="entry name" value="Ribosome-recycling factor"/>
    <property type="match status" value="1"/>
</dbReference>
<dbReference type="HAMAP" id="MF_00040">
    <property type="entry name" value="RRF"/>
    <property type="match status" value="1"/>
</dbReference>
<dbReference type="InterPro" id="IPR002661">
    <property type="entry name" value="Ribosome_recyc_fac"/>
</dbReference>
<dbReference type="InterPro" id="IPR023584">
    <property type="entry name" value="Ribosome_recyc_fac_dom"/>
</dbReference>
<dbReference type="InterPro" id="IPR036191">
    <property type="entry name" value="RRF_sf"/>
</dbReference>
<dbReference type="NCBIfam" id="TIGR00496">
    <property type="entry name" value="frr"/>
    <property type="match status" value="1"/>
</dbReference>
<dbReference type="PANTHER" id="PTHR20982:SF3">
    <property type="entry name" value="MITOCHONDRIAL RIBOSOME RECYCLING FACTOR PSEUDO 1"/>
    <property type="match status" value="1"/>
</dbReference>
<dbReference type="PANTHER" id="PTHR20982">
    <property type="entry name" value="RIBOSOME RECYCLING FACTOR"/>
    <property type="match status" value="1"/>
</dbReference>
<dbReference type="Pfam" id="PF01765">
    <property type="entry name" value="RRF"/>
    <property type="match status" value="1"/>
</dbReference>
<dbReference type="SUPFAM" id="SSF55194">
    <property type="entry name" value="Ribosome recycling factor, RRF"/>
    <property type="match status" value="1"/>
</dbReference>
<name>RRF_MYXXD</name>
<keyword id="KW-0963">Cytoplasm</keyword>
<keyword id="KW-0648">Protein biosynthesis</keyword>
<keyword id="KW-1185">Reference proteome</keyword>
<protein>
    <recommendedName>
        <fullName evidence="1">Ribosome-recycling factor</fullName>
        <shortName evidence="1">RRF</shortName>
    </recommendedName>
    <alternativeName>
        <fullName evidence="1">Ribosome-releasing factor</fullName>
    </alternativeName>
</protein>